<keyword id="KW-0012">Acyltransferase</keyword>
<keyword id="KW-0963">Cytoplasm</keyword>
<keyword id="KW-0808">Transferase</keyword>
<comment type="function">
    <text evidence="1">Catalyzes the transfer of endogenously produced octanoic acid from octanoyl-acyl-carrier-protein onto the lipoyl domains of lipoate-dependent enzymes. Lipoyl-ACP can also act as a substrate although octanoyl-ACP is likely to be the physiological substrate.</text>
</comment>
<comment type="catalytic activity">
    <reaction evidence="1">
        <text>octanoyl-[ACP] + L-lysyl-[protein] = N(6)-octanoyl-L-lysyl-[protein] + holo-[ACP] + H(+)</text>
        <dbReference type="Rhea" id="RHEA:17665"/>
        <dbReference type="Rhea" id="RHEA-COMP:9636"/>
        <dbReference type="Rhea" id="RHEA-COMP:9685"/>
        <dbReference type="Rhea" id="RHEA-COMP:9752"/>
        <dbReference type="Rhea" id="RHEA-COMP:9928"/>
        <dbReference type="ChEBI" id="CHEBI:15378"/>
        <dbReference type="ChEBI" id="CHEBI:29969"/>
        <dbReference type="ChEBI" id="CHEBI:64479"/>
        <dbReference type="ChEBI" id="CHEBI:78463"/>
        <dbReference type="ChEBI" id="CHEBI:78809"/>
        <dbReference type="EC" id="2.3.1.181"/>
    </reaction>
</comment>
<comment type="pathway">
    <text evidence="1">Protein modification; protein lipoylation via endogenous pathway; protein N(6)-(lipoyl)lysine from octanoyl-[acyl-carrier-protein]: step 1/2.</text>
</comment>
<comment type="subcellular location">
    <subcellularLocation>
        <location evidence="1">Cytoplasm</location>
    </subcellularLocation>
</comment>
<comment type="miscellaneous">
    <text evidence="1">In the reaction, the free carboxyl group of octanoic acid is attached via an amide linkage to the epsilon-amino group of a specific lysine residue of lipoyl domains of lipoate-dependent enzymes.</text>
</comment>
<comment type="similarity">
    <text evidence="1">Belongs to the LipB family.</text>
</comment>
<dbReference type="EC" id="2.3.1.181" evidence="1"/>
<dbReference type="EMBL" id="AE003849">
    <property type="protein sequence ID" value="AAF84079.1"/>
    <property type="molecule type" value="Genomic_DNA"/>
</dbReference>
<dbReference type="PIR" id="D82701">
    <property type="entry name" value="D82701"/>
</dbReference>
<dbReference type="RefSeq" id="WP_010893776.1">
    <property type="nucleotide sequence ID" value="NC_002488.3"/>
</dbReference>
<dbReference type="SMR" id="Q9PDV9"/>
<dbReference type="STRING" id="160492.XF_1270"/>
<dbReference type="KEGG" id="xfa:XF_1270"/>
<dbReference type="eggNOG" id="COG0321">
    <property type="taxonomic scope" value="Bacteria"/>
</dbReference>
<dbReference type="HOGENOM" id="CLU_035168_3_1_6"/>
<dbReference type="UniPathway" id="UPA00538">
    <property type="reaction ID" value="UER00592"/>
</dbReference>
<dbReference type="Proteomes" id="UP000000812">
    <property type="component" value="Chromosome"/>
</dbReference>
<dbReference type="GO" id="GO:0005737">
    <property type="term" value="C:cytoplasm"/>
    <property type="evidence" value="ECO:0007669"/>
    <property type="project" value="UniProtKB-SubCell"/>
</dbReference>
<dbReference type="GO" id="GO:0033819">
    <property type="term" value="F:lipoyl(octanoyl) transferase activity"/>
    <property type="evidence" value="ECO:0007669"/>
    <property type="project" value="UniProtKB-EC"/>
</dbReference>
<dbReference type="GO" id="GO:0036211">
    <property type="term" value="P:protein modification process"/>
    <property type="evidence" value="ECO:0007669"/>
    <property type="project" value="InterPro"/>
</dbReference>
<dbReference type="CDD" id="cd16444">
    <property type="entry name" value="LipB"/>
    <property type="match status" value="1"/>
</dbReference>
<dbReference type="FunFam" id="3.30.930.10:FF:000020">
    <property type="entry name" value="Octanoyltransferase"/>
    <property type="match status" value="1"/>
</dbReference>
<dbReference type="Gene3D" id="3.30.930.10">
    <property type="entry name" value="Bira Bifunctional Protein, Domain 2"/>
    <property type="match status" value="1"/>
</dbReference>
<dbReference type="HAMAP" id="MF_00013">
    <property type="entry name" value="LipB"/>
    <property type="match status" value="1"/>
</dbReference>
<dbReference type="InterPro" id="IPR045864">
    <property type="entry name" value="aa-tRNA-synth_II/BPL/LPL"/>
</dbReference>
<dbReference type="InterPro" id="IPR004143">
    <property type="entry name" value="BPL_LPL_catalytic"/>
</dbReference>
<dbReference type="InterPro" id="IPR000544">
    <property type="entry name" value="Octanoyltransferase"/>
</dbReference>
<dbReference type="InterPro" id="IPR020605">
    <property type="entry name" value="Octanoyltransferase_CS"/>
</dbReference>
<dbReference type="NCBIfam" id="TIGR00214">
    <property type="entry name" value="lipB"/>
    <property type="match status" value="1"/>
</dbReference>
<dbReference type="NCBIfam" id="NF010922">
    <property type="entry name" value="PRK14342.1"/>
    <property type="match status" value="1"/>
</dbReference>
<dbReference type="PANTHER" id="PTHR10993:SF7">
    <property type="entry name" value="LIPOYLTRANSFERASE 2, MITOCHONDRIAL-RELATED"/>
    <property type="match status" value="1"/>
</dbReference>
<dbReference type="PANTHER" id="PTHR10993">
    <property type="entry name" value="OCTANOYLTRANSFERASE"/>
    <property type="match status" value="1"/>
</dbReference>
<dbReference type="Pfam" id="PF21948">
    <property type="entry name" value="LplA-B_cat"/>
    <property type="match status" value="1"/>
</dbReference>
<dbReference type="PIRSF" id="PIRSF016262">
    <property type="entry name" value="LPLase"/>
    <property type="match status" value="1"/>
</dbReference>
<dbReference type="SUPFAM" id="SSF55681">
    <property type="entry name" value="Class II aaRS and biotin synthetases"/>
    <property type="match status" value="1"/>
</dbReference>
<dbReference type="PROSITE" id="PS51733">
    <property type="entry name" value="BPL_LPL_CATALYTIC"/>
    <property type="match status" value="1"/>
</dbReference>
<dbReference type="PROSITE" id="PS01313">
    <property type="entry name" value="LIPB"/>
    <property type="match status" value="1"/>
</dbReference>
<name>LIPB_XYLFA</name>
<organism>
    <name type="scientific">Xylella fastidiosa (strain 9a5c)</name>
    <dbReference type="NCBI Taxonomy" id="160492"/>
    <lineage>
        <taxon>Bacteria</taxon>
        <taxon>Pseudomonadati</taxon>
        <taxon>Pseudomonadota</taxon>
        <taxon>Gammaproteobacteria</taxon>
        <taxon>Lysobacterales</taxon>
        <taxon>Lysobacteraceae</taxon>
        <taxon>Xylella</taxon>
    </lineage>
</organism>
<accession>Q9PDV9</accession>
<protein>
    <recommendedName>
        <fullName evidence="1">Octanoyltransferase</fullName>
        <ecNumber evidence="1">2.3.1.181</ecNumber>
    </recommendedName>
    <alternativeName>
        <fullName evidence="1">Lipoate-protein ligase B</fullName>
    </alternativeName>
    <alternativeName>
        <fullName evidence="1">Lipoyl/octanoyl transferase</fullName>
    </alternativeName>
    <alternativeName>
        <fullName evidence="1">Octanoyl-[acyl-carrier-protein]-protein N-octanoyltransferase</fullName>
    </alternativeName>
</protein>
<feature type="chain" id="PRO_0000062898" description="Octanoyltransferase">
    <location>
        <begin position="1"/>
        <end position="229"/>
    </location>
</feature>
<feature type="domain" description="BPL/LPL catalytic" evidence="2">
    <location>
        <begin position="45"/>
        <end position="220"/>
    </location>
</feature>
<feature type="active site" description="Acyl-thioester intermediate" evidence="1">
    <location>
        <position position="182"/>
    </location>
</feature>
<feature type="binding site" evidence="1">
    <location>
        <begin position="84"/>
        <end position="91"/>
    </location>
    <ligand>
        <name>substrate</name>
    </ligand>
</feature>
<feature type="binding site" evidence="1">
    <location>
        <begin position="151"/>
        <end position="153"/>
    </location>
    <ligand>
        <name>substrate</name>
    </ligand>
</feature>
<feature type="binding site" evidence="1">
    <location>
        <begin position="164"/>
        <end position="166"/>
    </location>
    <ligand>
        <name>substrate</name>
    </ligand>
</feature>
<feature type="site" description="Lowers pKa of active site Cys" evidence="1">
    <location>
        <position position="148"/>
    </location>
</feature>
<gene>
    <name evidence="1" type="primary">lipB</name>
    <name type="ordered locus">XF_1270</name>
</gene>
<evidence type="ECO:0000255" key="1">
    <source>
        <dbReference type="HAMAP-Rule" id="MF_00013"/>
    </source>
</evidence>
<evidence type="ECO:0000255" key="2">
    <source>
        <dbReference type="PROSITE-ProRule" id="PRU01067"/>
    </source>
</evidence>
<proteinExistence type="inferred from homology"/>
<reference key="1">
    <citation type="journal article" date="2000" name="Nature">
        <title>The genome sequence of the plant pathogen Xylella fastidiosa.</title>
        <authorList>
            <person name="Simpson A.J.G."/>
            <person name="Reinach F.C."/>
            <person name="Arruda P."/>
            <person name="Abreu F.A."/>
            <person name="Acencio M."/>
            <person name="Alvarenga R."/>
            <person name="Alves L.M.C."/>
            <person name="Araya J.E."/>
            <person name="Baia G.S."/>
            <person name="Baptista C.S."/>
            <person name="Barros M.H."/>
            <person name="Bonaccorsi E.D."/>
            <person name="Bordin S."/>
            <person name="Bove J.M."/>
            <person name="Briones M.R.S."/>
            <person name="Bueno M.R.P."/>
            <person name="Camargo A.A."/>
            <person name="Camargo L.E.A."/>
            <person name="Carraro D.M."/>
            <person name="Carrer H."/>
            <person name="Colauto N.B."/>
            <person name="Colombo C."/>
            <person name="Costa F.F."/>
            <person name="Costa M.C.R."/>
            <person name="Costa-Neto C.M."/>
            <person name="Coutinho L.L."/>
            <person name="Cristofani M."/>
            <person name="Dias-Neto E."/>
            <person name="Docena C."/>
            <person name="El-Dorry H."/>
            <person name="Facincani A.P."/>
            <person name="Ferreira A.J.S."/>
            <person name="Ferreira V.C.A."/>
            <person name="Ferro J.A."/>
            <person name="Fraga J.S."/>
            <person name="Franca S.C."/>
            <person name="Franco M.C."/>
            <person name="Frohme M."/>
            <person name="Furlan L.R."/>
            <person name="Garnier M."/>
            <person name="Goldman G.H."/>
            <person name="Goldman M.H.S."/>
            <person name="Gomes S.L."/>
            <person name="Gruber A."/>
            <person name="Ho P.L."/>
            <person name="Hoheisel J.D."/>
            <person name="Junqueira M.L."/>
            <person name="Kemper E.L."/>
            <person name="Kitajima J.P."/>
            <person name="Krieger J.E."/>
            <person name="Kuramae E.E."/>
            <person name="Laigret F."/>
            <person name="Lambais M.R."/>
            <person name="Leite L.C.C."/>
            <person name="Lemos E.G.M."/>
            <person name="Lemos M.V.F."/>
            <person name="Lopes S.A."/>
            <person name="Lopes C.R."/>
            <person name="Machado J.A."/>
            <person name="Machado M.A."/>
            <person name="Madeira A.M.B.N."/>
            <person name="Madeira H.M.F."/>
            <person name="Marino C.L."/>
            <person name="Marques M.V."/>
            <person name="Martins E.A.L."/>
            <person name="Martins E.M.F."/>
            <person name="Matsukuma A.Y."/>
            <person name="Menck C.F.M."/>
            <person name="Miracca E.C."/>
            <person name="Miyaki C.Y."/>
            <person name="Monteiro-Vitorello C.B."/>
            <person name="Moon D.H."/>
            <person name="Nagai M.A."/>
            <person name="Nascimento A.L.T.O."/>
            <person name="Netto L.E.S."/>
            <person name="Nhani A. Jr."/>
            <person name="Nobrega F.G."/>
            <person name="Nunes L.R."/>
            <person name="Oliveira M.A."/>
            <person name="de Oliveira M.C."/>
            <person name="de Oliveira R.C."/>
            <person name="Palmieri D.A."/>
            <person name="Paris A."/>
            <person name="Peixoto B.R."/>
            <person name="Pereira G.A.G."/>
            <person name="Pereira H.A. Jr."/>
            <person name="Pesquero J.B."/>
            <person name="Quaggio R.B."/>
            <person name="Roberto P.G."/>
            <person name="Rodrigues V."/>
            <person name="de Rosa A.J.M."/>
            <person name="de Rosa V.E. Jr."/>
            <person name="de Sa R.G."/>
            <person name="Santelli R.V."/>
            <person name="Sawasaki H.E."/>
            <person name="da Silva A.C.R."/>
            <person name="da Silva A.M."/>
            <person name="da Silva F.R."/>
            <person name="Silva W.A. Jr."/>
            <person name="da Silveira J.F."/>
            <person name="Silvestri M.L.Z."/>
            <person name="Siqueira W.J."/>
            <person name="de Souza A.A."/>
            <person name="de Souza A.P."/>
            <person name="Terenzi M.F."/>
            <person name="Truffi D."/>
            <person name="Tsai S.M."/>
            <person name="Tsuhako M.H."/>
            <person name="Vallada H."/>
            <person name="Van Sluys M.A."/>
            <person name="Verjovski-Almeida S."/>
            <person name="Vettore A.L."/>
            <person name="Zago M.A."/>
            <person name="Zatz M."/>
            <person name="Meidanis J."/>
            <person name="Setubal J.C."/>
        </authorList>
    </citation>
    <scope>NUCLEOTIDE SEQUENCE [LARGE SCALE GENOMIC DNA]</scope>
    <source>
        <strain>9a5c</strain>
    </source>
</reference>
<sequence length="229" mass="24780">MDAVNACGAVAPSHVGRAALLRMLGAQPYVPVWHAMQRFTDVRDATAVDELWVVEHDPVFTLGQAGKLEHVLDPGEIPVVHVDRGGQVTYHGPGQLVVYPLLDLPRLGLGVRDYVYGIEQAVINTLAQWNILGERREHAPGVYVGGAKIAALGIRVRHGCSFHGVAFNVAMDLEPFHRIHPCGYRGLQVTSVLDLGGPSEMDTVAAALLAELARQFCFVLHPTSGWLSS</sequence>